<evidence type="ECO:0000255" key="1">
    <source>
        <dbReference type="HAMAP-Rule" id="MF_00367"/>
    </source>
</evidence>
<evidence type="ECO:0000255" key="2">
    <source>
        <dbReference type="PROSITE-ProRule" id="PRU01050"/>
    </source>
</evidence>
<organism>
    <name type="scientific">Yersinia pseudotuberculosis serotype I (strain IP32953)</name>
    <dbReference type="NCBI Taxonomy" id="273123"/>
    <lineage>
        <taxon>Bacteria</taxon>
        <taxon>Pseudomonadati</taxon>
        <taxon>Pseudomonadota</taxon>
        <taxon>Gammaproteobacteria</taxon>
        <taxon>Enterobacterales</taxon>
        <taxon>Yersiniaceae</taxon>
        <taxon>Yersinia</taxon>
    </lineage>
</organism>
<proteinExistence type="inferred from homology"/>
<reference key="1">
    <citation type="journal article" date="2004" name="Proc. Natl. Acad. Sci. U.S.A.">
        <title>Insights into the evolution of Yersinia pestis through whole-genome comparison with Yersinia pseudotuberculosis.</title>
        <authorList>
            <person name="Chain P.S.G."/>
            <person name="Carniel E."/>
            <person name="Larimer F.W."/>
            <person name="Lamerdin J."/>
            <person name="Stoutland P.O."/>
            <person name="Regala W.M."/>
            <person name="Georgescu A.M."/>
            <person name="Vergez L.M."/>
            <person name="Land M.L."/>
            <person name="Motin V.L."/>
            <person name="Brubaker R.R."/>
            <person name="Fowler J."/>
            <person name="Hinnebusch J."/>
            <person name="Marceau M."/>
            <person name="Medigue C."/>
            <person name="Simonet M."/>
            <person name="Chenal-Francisque V."/>
            <person name="Souza B."/>
            <person name="Dacheux D."/>
            <person name="Elliott J.M."/>
            <person name="Derbise A."/>
            <person name="Hauser L.J."/>
            <person name="Garcia E."/>
        </authorList>
    </citation>
    <scope>NUCLEOTIDE SEQUENCE [LARGE SCALE GENOMIC DNA]</scope>
    <source>
        <strain>IP32953</strain>
    </source>
</reference>
<comment type="function">
    <text evidence="1">An essential GTPase that binds both GDP and GTP, with rapid nucleotide exchange. Plays a role in 16S rRNA processing and 30S ribosomal subunit biogenesis and possibly also in cell cycle regulation and energy metabolism.</text>
</comment>
<comment type="subunit">
    <text evidence="1">Monomer.</text>
</comment>
<comment type="subcellular location">
    <subcellularLocation>
        <location>Cytoplasm</location>
    </subcellularLocation>
    <subcellularLocation>
        <location evidence="1">Cell inner membrane</location>
        <topology evidence="1">Peripheral membrane protein</topology>
    </subcellularLocation>
</comment>
<comment type="similarity">
    <text evidence="1 2">Belongs to the TRAFAC class TrmE-Era-EngA-EngB-Septin-like GTPase superfamily. Era GTPase family.</text>
</comment>
<protein>
    <recommendedName>
        <fullName evidence="1">GTPase Era</fullName>
    </recommendedName>
</protein>
<feature type="chain" id="PRO_1000079777" description="GTPase Era">
    <location>
        <begin position="1"/>
        <end position="303"/>
    </location>
</feature>
<feature type="domain" description="Era-type G" evidence="2">
    <location>
        <begin position="8"/>
        <end position="176"/>
    </location>
</feature>
<feature type="domain" description="KH type-2" evidence="1">
    <location>
        <begin position="207"/>
        <end position="284"/>
    </location>
</feature>
<feature type="region of interest" description="G1" evidence="2">
    <location>
        <begin position="16"/>
        <end position="23"/>
    </location>
</feature>
<feature type="region of interest" description="G2" evidence="2">
    <location>
        <begin position="42"/>
        <end position="46"/>
    </location>
</feature>
<feature type="region of interest" description="G3" evidence="2">
    <location>
        <begin position="63"/>
        <end position="66"/>
    </location>
</feature>
<feature type="region of interest" description="G4" evidence="2">
    <location>
        <begin position="125"/>
        <end position="128"/>
    </location>
</feature>
<feature type="region of interest" description="G5" evidence="2">
    <location>
        <begin position="155"/>
        <end position="157"/>
    </location>
</feature>
<feature type="binding site" evidence="1">
    <location>
        <begin position="16"/>
        <end position="23"/>
    </location>
    <ligand>
        <name>GTP</name>
        <dbReference type="ChEBI" id="CHEBI:37565"/>
    </ligand>
</feature>
<feature type="binding site" evidence="1">
    <location>
        <begin position="63"/>
        <end position="67"/>
    </location>
    <ligand>
        <name>GTP</name>
        <dbReference type="ChEBI" id="CHEBI:37565"/>
    </ligand>
</feature>
<feature type="binding site" evidence="1">
    <location>
        <begin position="125"/>
        <end position="128"/>
    </location>
    <ligand>
        <name>GTP</name>
        <dbReference type="ChEBI" id="CHEBI:37565"/>
    </ligand>
</feature>
<sequence length="303" mass="34473">MSEVEKTYCGFIAIVGRPNVGKSTLLNELLGQKISITSRKPQTTRHRIMGIHTEGPYQAIYVDTPGLHIEEKRAINRLMNRAASSSLGDVELVIFVVEGTHWTADDEMVVNKLRSLQCPVLLAINKVDNVTDKTKLLPHMQFLSQQMNFLDVVPISAEKGMNVDTIASIVRKHMPEAEHHFPEDYITDRSQRFMASEIIREKLMRFLGEELPYSVTVEIEQFVPNERGGYNIHGLILVEREGQKKMVIGNKGSKIKVIGTEARQDMERMFEAKVHLELWVKVKSGWADDERALRSLGYTDDLK</sequence>
<keyword id="KW-0997">Cell inner membrane</keyword>
<keyword id="KW-1003">Cell membrane</keyword>
<keyword id="KW-0963">Cytoplasm</keyword>
<keyword id="KW-0342">GTP-binding</keyword>
<keyword id="KW-0472">Membrane</keyword>
<keyword id="KW-0547">Nucleotide-binding</keyword>
<keyword id="KW-0690">Ribosome biogenesis</keyword>
<keyword id="KW-0694">RNA-binding</keyword>
<keyword id="KW-0699">rRNA-binding</keyword>
<gene>
    <name evidence="1" type="primary">era</name>
    <name type="ordered locus">YPTB2889</name>
</gene>
<name>ERA_YERPS</name>
<dbReference type="EMBL" id="BX936398">
    <property type="protein sequence ID" value="CAH22127.1"/>
    <property type="molecule type" value="Genomic_DNA"/>
</dbReference>
<dbReference type="RefSeq" id="WP_002214829.1">
    <property type="nucleotide sequence ID" value="NZ_CP009712.1"/>
</dbReference>
<dbReference type="SMR" id="Q667V2"/>
<dbReference type="GeneID" id="96662248"/>
<dbReference type="KEGG" id="ypo:BZ17_3742"/>
<dbReference type="KEGG" id="yps:YPTB2889"/>
<dbReference type="PATRIC" id="fig|273123.14.peg.3924"/>
<dbReference type="Proteomes" id="UP000001011">
    <property type="component" value="Chromosome"/>
</dbReference>
<dbReference type="GO" id="GO:0005829">
    <property type="term" value="C:cytosol"/>
    <property type="evidence" value="ECO:0007669"/>
    <property type="project" value="TreeGrafter"/>
</dbReference>
<dbReference type="GO" id="GO:0005886">
    <property type="term" value="C:plasma membrane"/>
    <property type="evidence" value="ECO:0007669"/>
    <property type="project" value="UniProtKB-SubCell"/>
</dbReference>
<dbReference type="GO" id="GO:0005525">
    <property type="term" value="F:GTP binding"/>
    <property type="evidence" value="ECO:0007669"/>
    <property type="project" value="UniProtKB-UniRule"/>
</dbReference>
<dbReference type="GO" id="GO:0003924">
    <property type="term" value="F:GTPase activity"/>
    <property type="evidence" value="ECO:0007669"/>
    <property type="project" value="UniProtKB-UniRule"/>
</dbReference>
<dbReference type="GO" id="GO:0043024">
    <property type="term" value="F:ribosomal small subunit binding"/>
    <property type="evidence" value="ECO:0007669"/>
    <property type="project" value="TreeGrafter"/>
</dbReference>
<dbReference type="GO" id="GO:0070181">
    <property type="term" value="F:small ribosomal subunit rRNA binding"/>
    <property type="evidence" value="ECO:0007669"/>
    <property type="project" value="UniProtKB-UniRule"/>
</dbReference>
<dbReference type="GO" id="GO:0000028">
    <property type="term" value="P:ribosomal small subunit assembly"/>
    <property type="evidence" value="ECO:0007669"/>
    <property type="project" value="TreeGrafter"/>
</dbReference>
<dbReference type="CDD" id="cd04163">
    <property type="entry name" value="Era"/>
    <property type="match status" value="1"/>
</dbReference>
<dbReference type="CDD" id="cd22534">
    <property type="entry name" value="KH-II_Era"/>
    <property type="match status" value="1"/>
</dbReference>
<dbReference type="FunFam" id="3.30.300.20:FF:000003">
    <property type="entry name" value="GTPase Era"/>
    <property type="match status" value="1"/>
</dbReference>
<dbReference type="FunFam" id="3.40.50.300:FF:000094">
    <property type="entry name" value="GTPase Era"/>
    <property type="match status" value="1"/>
</dbReference>
<dbReference type="Gene3D" id="3.30.300.20">
    <property type="match status" value="1"/>
</dbReference>
<dbReference type="Gene3D" id="3.40.50.300">
    <property type="entry name" value="P-loop containing nucleotide triphosphate hydrolases"/>
    <property type="match status" value="1"/>
</dbReference>
<dbReference type="HAMAP" id="MF_00367">
    <property type="entry name" value="GTPase_Era"/>
    <property type="match status" value="1"/>
</dbReference>
<dbReference type="InterPro" id="IPR030388">
    <property type="entry name" value="G_ERA_dom"/>
</dbReference>
<dbReference type="InterPro" id="IPR006073">
    <property type="entry name" value="GTP-bd"/>
</dbReference>
<dbReference type="InterPro" id="IPR005662">
    <property type="entry name" value="GTPase_Era-like"/>
</dbReference>
<dbReference type="InterPro" id="IPR015946">
    <property type="entry name" value="KH_dom-like_a/b"/>
</dbReference>
<dbReference type="InterPro" id="IPR004044">
    <property type="entry name" value="KH_dom_type_2"/>
</dbReference>
<dbReference type="InterPro" id="IPR009019">
    <property type="entry name" value="KH_sf_prok-type"/>
</dbReference>
<dbReference type="InterPro" id="IPR027417">
    <property type="entry name" value="P-loop_NTPase"/>
</dbReference>
<dbReference type="InterPro" id="IPR005225">
    <property type="entry name" value="Small_GTP-bd"/>
</dbReference>
<dbReference type="NCBIfam" id="TIGR00436">
    <property type="entry name" value="era"/>
    <property type="match status" value="1"/>
</dbReference>
<dbReference type="NCBIfam" id="NF000908">
    <property type="entry name" value="PRK00089.1"/>
    <property type="match status" value="1"/>
</dbReference>
<dbReference type="NCBIfam" id="TIGR00231">
    <property type="entry name" value="small_GTP"/>
    <property type="match status" value="1"/>
</dbReference>
<dbReference type="PANTHER" id="PTHR42698">
    <property type="entry name" value="GTPASE ERA"/>
    <property type="match status" value="1"/>
</dbReference>
<dbReference type="PANTHER" id="PTHR42698:SF1">
    <property type="entry name" value="GTPASE ERA, MITOCHONDRIAL"/>
    <property type="match status" value="1"/>
</dbReference>
<dbReference type="Pfam" id="PF07650">
    <property type="entry name" value="KH_2"/>
    <property type="match status" value="1"/>
</dbReference>
<dbReference type="Pfam" id="PF01926">
    <property type="entry name" value="MMR_HSR1"/>
    <property type="match status" value="1"/>
</dbReference>
<dbReference type="SUPFAM" id="SSF52540">
    <property type="entry name" value="P-loop containing nucleoside triphosphate hydrolases"/>
    <property type="match status" value="1"/>
</dbReference>
<dbReference type="SUPFAM" id="SSF54814">
    <property type="entry name" value="Prokaryotic type KH domain (KH-domain type II)"/>
    <property type="match status" value="1"/>
</dbReference>
<dbReference type="PROSITE" id="PS51713">
    <property type="entry name" value="G_ERA"/>
    <property type="match status" value="1"/>
</dbReference>
<dbReference type="PROSITE" id="PS50823">
    <property type="entry name" value="KH_TYPE_2"/>
    <property type="match status" value="1"/>
</dbReference>
<accession>Q667V2</accession>